<dbReference type="EMBL" id="CP001034">
    <property type="protein sequence ID" value="ACB84938.1"/>
    <property type="molecule type" value="Genomic_DNA"/>
</dbReference>
<dbReference type="RefSeq" id="WP_012447813.1">
    <property type="nucleotide sequence ID" value="NC_010718.1"/>
</dbReference>
<dbReference type="SMR" id="B2A2M3"/>
<dbReference type="FunCoup" id="B2A2M3">
    <property type="interactions" value="164"/>
</dbReference>
<dbReference type="STRING" id="457570.Nther_1355"/>
<dbReference type="KEGG" id="nth:Nther_1355"/>
<dbReference type="eggNOG" id="COG0333">
    <property type="taxonomic scope" value="Bacteria"/>
</dbReference>
<dbReference type="HOGENOM" id="CLU_129084_1_3_9"/>
<dbReference type="InParanoid" id="B2A2M3"/>
<dbReference type="OrthoDB" id="9812874at2"/>
<dbReference type="Proteomes" id="UP000001683">
    <property type="component" value="Chromosome"/>
</dbReference>
<dbReference type="GO" id="GO:0015934">
    <property type="term" value="C:large ribosomal subunit"/>
    <property type="evidence" value="ECO:0007669"/>
    <property type="project" value="InterPro"/>
</dbReference>
<dbReference type="GO" id="GO:0003735">
    <property type="term" value="F:structural constituent of ribosome"/>
    <property type="evidence" value="ECO:0007669"/>
    <property type="project" value="InterPro"/>
</dbReference>
<dbReference type="GO" id="GO:0006412">
    <property type="term" value="P:translation"/>
    <property type="evidence" value="ECO:0007669"/>
    <property type="project" value="UniProtKB-UniRule"/>
</dbReference>
<dbReference type="HAMAP" id="MF_00340">
    <property type="entry name" value="Ribosomal_bL32"/>
    <property type="match status" value="1"/>
</dbReference>
<dbReference type="InterPro" id="IPR002677">
    <property type="entry name" value="Ribosomal_bL32"/>
</dbReference>
<dbReference type="InterPro" id="IPR044957">
    <property type="entry name" value="Ribosomal_bL32_bact"/>
</dbReference>
<dbReference type="InterPro" id="IPR011332">
    <property type="entry name" value="Ribosomal_zn-bd"/>
</dbReference>
<dbReference type="NCBIfam" id="TIGR01031">
    <property type="entry name" value="rpmF_bact"/>
    <property type="match status" value="1"/>
</dbReference>
<dbReference type="PANTHER" id="PTHR35534">
    <property type="entry name" value="50S RIBOSOMAL PROTEIN L32"/>
    <property type="match status" value="1"/>
</dbReference>
<dbReference type="PANTHER" id="PTHR35534:SF1">
    <property type="entry name" value="LARGE RIBOSOMAL SUBUNIT PROTEIN BL32"/>
    <property type="match status" value="1"/>
</dbReference>
<dbReference type="Pfam" id="PF01783">
    <property type="entry name" value="Ribosomal_L32p"/>
    <property type="match status" value="1"/>
</dbReference>
<dbReference type="SUPFAM" id="SSF57829">
    <property type="entry name" value="Zn-binding ribosomal proteins"/>
    <property type="match status" value="1"/>
</dbReference>
<sequence>MAVPKKRTSKTRTNRRRAQKKARAPQFVECPQCREKKLPHRICQSCGHYKGEEIIEV</sequence>
<evidence type="ECO:0000255" key="1">
    <source>
        <dbReference type="HAMAP-Rule" id="MF_00340"/>
    </source>
</evidence>
<evidence type="ECO:0000256" key="2">
    <source>
        <dbReference type="SAM" id="MobiDB-lite"/>
    </source>
</evidence>
<evidence type="ECO:0000305" key="3"/>
<reference key="1">
    <citation type="submission" date="2008-04" db="EMBL/GenBank/DDBJ databases">
        <title>Complete sequence of chromosome of Natranaerobius thermophilus JW/NM-WN-LF.</title>
        <authorList>
            <consortium name="US DOE Joint Genome Institute"/>
            <person name="Copeland A."/>
            <person name="Lucas S."/>
            <person name="Lapidus A."/>
            <person name="Glavina del Rio T."/>
            <person name="Dalin E."/>
            <person name="Tice H."/>
            <person name="Bruce D."/>
            <person name="Goodwin L."/>
            <person name="Pitluck S."/>
            <person name="Chertkov O."/>
            <person name="Brettin T."/>
            <person name="Detter J.C."/>
            <person name="Han C."/>
            <person name="Kuske C.R."/>
            <person name="Schmutz J."/>
            <person name="Larimer F."/>
            <person name="Land M."/>
            <person name="Hauser L."/>
            <person name="Kyrpides N."/>
            <person name="Lykidis A."/>
            <person name="Mesbah N.M."/>
            <person name="Wiegel J."/>
        </authorList>
    </citation>
    <scope>NUCLEOTIDE SEQUENCE [LARGE SCALE GENOMIC DNA]</scope>
    <source>
        <strain>ATCC BAA-1301 / DSM 18059 / JW/NM-WN-LF</strain>
    </source>
</reference>
<protein>
    <recommendedName>
        <fullName evidence="1">Large ribosomal subunit protein bL32</fullName>
    </recommendedName>
    <alternativeName>
        <fullName evidence="3">50S ribosomal protein L32</fullName>
    </alternativeName>
</protein>
<proteinExistence type="inferred from homology"/>
<accession>B2A2M3</accession>
<gene>
    <name evidence="1" type="primary">rpmF</name>
    <name type="ordered locus">Nther_1355</name>
</gene>
<comment type="similarity">
    <text evidence="1">Belongs to the bacterial ribosomal protein bL32 family.</text>
</comment>
<keyword id="KW-1185">Reference proteome</keyword>
<keyword id="KW-0687">Ribonucleoprotein</keyword>
<keyword id="KW-0689">Ribosomal protein</keyword>
<name>RL32_NATTJ</name>
<organism>
    <name type="scientific">Natranaerobius thermophilus (strain ATCC BAA-1301 / DSM 18059 / JW/NM-WN-LF)</name>
    <dbReference type="NCBI Taxonomy" id="457570"/>
    <lineage>
        <taxon>Bacteria</taxon>
        <taxon>Bacillati</taxon>
        <taxon>Bacillota</taxon>
        <taxon>Clostridia</taxon>
        <taxon>Natranaerobiales</taxon>
        <taxon>Natranaerobiaceae</taxon>
        <taxon>Natranaerobius</taxon>
    </lineage>
</organism>
<feature type="chain" id="PRO_1000120148" description="Large ribosomal subunit protein bL32">
    <location>
        <begin position="1"/>
        <end position="57"/>
    </location>
</feature>
<feature type="region of interest" description="Disordered" evidence="2">
    <location>
        <begin position="1"/>
        <end position="23"/>
    </location>
</feature>